<sequence length="397" mass="43396">MRCPKCLLCLSALLTLLGLKVYIEWTSESRLSKAYPSPRGTPPSPTPANPEPTLPANLSTRLGQTIPLPFAYWNQQQWRLGSLPSGDSTETGGCQAWGAAAATEIPDFASYPKDLRRFLLSAACRSFPQWLPGGGGSQVSSCSDTDVPYLLLAVKSEPGRFAERQAVRETWGSPAPGIRLLFLLGSPVGEAGPDLDSLVAWESRRYSDLLLWDFLDVPFNQTLKDLLLLAWLGRHCPTVSFVLRAQDDAFVHTPALLAHLRALPPASARSLYLGEVFTQAMPLRKPGGPFYVPESFFEGGYPAYASGGGYVIAGRLAPWLLRAAARVAPFPFEDVYTGLCIRALGLVPQAHPGFLTAWPADRTADHCAFRNLLLVRPLGPQASIRLWKQLQDPRLQC</sequence>
<comment type="function">
    <text evidence="5 6">Beta-1,3-N-acetylglucosaminyltransferase that plays a role in the elongation of specific branch structures of multiantennary N-glycans. Has strong activity towards tetraantennary N-glycans and 2,6 triantennary glycans.</text>
</comment>
<comment type="pathway">
    <text evidence="9">Protein modification; protein glycosylation.</text>
</comment>
<comment type="subunit">
    <text evidence="6 7">Interacts with B3GNT2; this interaction greatly increases B3GNT2 catalytic activity, independently of B3GNT8 enzymatic activity.</text>
</comment>
<comment type="interaction">
    <interactant intactId="EBI-20593091">
        <id>Q7Z7M8</id>
    </interactant>
    <interactant intactId="EBI-3922389">
        <id>Q9NY97</id>
        <label>B3GNT2</label>
    </interactant>
    <organismsDiffer>false</organismsDiffer>
    <experiments>3</experiments>
</comment>
<comment type="subcellular location">
    <subcellularLocation>
        <location evidence="1">Golgi apparatus membrane</location>
        <topology evidence="1">Single-pass type II membrane protein</topology>
    </subcellularLocation>
</comment>
<comment type="tissue specificity">
    <text evidence="4 5">Highly expressed in small intestine, pancreas, spleen, bone marrow, lung, throat, and ileum, and weakly in fetal brain, cerebellum, heart, liver, tongue, breast, uteri, and testis. Not detected in colon. Differentially expressed in human tumor cell lines.</text>
</comment>
<comment type="induction">
    <text evidence="5">Up-regulated in colon cancer.</text>
</comment>
<comment type="similarity">
    <text evidence="2">Belongs to the glycosyltransferase 31 family.</text>
</comment>
<reference evidence="9 10" key="1">
    <citation type="journal article" date="2004" name="Glycoconj. J.">
        <title>Cloning and tissue distribution of the human B3GALT7 gene, a member of the beta1,3-Glycosyltransferase family.</title>
        <authorList>
            <person name="Huang C."/>
            <person name="Zhou J."/>
            <person name="Wu S."/>
            <person name="Shan Y."/>
            <person name="Teng S."/>
            <person name="Yu L."/>
        </authorList>
    </citation>
    <scope>NUCLEOTIDE SEQUENCE [MRNA]</scope>
    <scope>TISSUE SPECIFICITY</scope>
    <source>
        <tissue evidence="4">Lung</tissue>
    </source>
</reference>
<reference evidence="9 11" key="2">
    <citation type="journal article" date="2005" name="FEBS Lett.">
        <title>A novel beta1,3-N-acetylglucosaminyltransferase (beta3Gn-T8), which synthesizes poly-N-acetyllactosamine, is dramatically upregulated in colon cancer.</title>
        <authorList>
            <person name="Ishida H."/>
            <person name="Togayachi A."/>
            <person name="Sakai T."/>
            <person name="Iwai T."/>
            <person name="Hiruma T."/>
            <person name="Sato T."/>
            <person name="Okubo R."/>
            <person name="Inaba N."/>
            <person name="Kudo T."/>
            <person name="Gotoh M."/>
            <person name="Shoda J."/>
            <person name="Tanaka N."/>
            <person name="Narimatsu H."/>
        </authorList>
    </citation>
    <scope>NUCLEOTIDE SEQUENCE [MRNA]</scope>
    <scope>FUNCTION</scope>
    <scope>TISSUE SPECIFICITY</scope>
    <scope>INDUCTION</scope>
    <scope>ENZYME ACTIVITY</scope>
    <source>
        <tissue evidence="11">Colon cancer</tissue>
    </source>
</reference>
<reference evidence="12" key="3">
    <citation type="submission" date="2001-11" db="EMBL/GenBank/DDBJ databases">
        <title>Beta1,3 GlcNAc-Transferase-T7, core 3 synthase.</title>
        <authorList>
            <person name="Bennett E.P."/>
        </authorList>
    </citation>
    <scope>NUCLEOTIDE SEQUENCE [MRNA]</scope>
</reference>
<reference evidence="9" key="4">
    <citation type="journal article" date="2005" name="Glycobiology">
        <title>Characterization of a novel galactose beta1,3-N-acetylglucosaminyltransferase (beta3Gn-T8): the complex formation of beta3Gn-T2 and beta3Gn-T8 enhances enzymatic activity.</title>
        <authorList>
            <person name="Seko A."/>
            <person name="Yamashita K."/>
        </authorList>
    </citation>
    <scope>FUNCTION</scope>
    <scope>INTERACTION WITH B3GNT2</scope>
    <scope>ENZYME ACTIVITY</scope>
</reference>
<reference key="5">
    <citation type="journal article" date="2008" name="J. Biol. Chem.">
        <title>Activation of beta1,3-N-acetylglucosaminyltransferase-2 (beta3Gn-T2) by beta3Gn-T8. Possible involvement of beta3Gn-T8 in increasing poly-N-acetyllactosamine chains in differentiated HL-60 cells.</title>
        <authorList>
            <person name="Seko A."/>
            <person name="Yamashita K."/>
        </authorList>
    </citation>
    <scope>INTERACTION WITH B3GNT2</scope>
    <scope>MUTAGENESIS OF GLN-246</scope>
</reference>
<accession>Q7Z7M8</accession>
<feature type="chain" id="PRO_0000306381" description="UDP-GlcNAc:betaGal beta-1,3-N-acetylglucosaminyltransferase 8">
    <location>
        <begin position="1"/>
        <end position="397"/>
    </location>
</feature>
<feature type="topological domain" description="Cytoplasmic" evidence="2">
    <location>
        <begin position="1"/>
        <end position="6"/>
    </location>
</feature>
<feature type="transmembrane region" description="Helical; Signal-anchor for type II membrane protein" evidence="2">
    <location>
        <begin position="7"/>
        <end position="23"/>
    </location>
</feature>
<feature type="topological domain" description="Lumenal" evidence="2">
    <location>
        <begin position="24"/>
        <end position="397"/>
    </location>
</feature>
<feature type="region of interest" description="Disordered" evidence="3">
    <location>
        <begin position="33"/>
        <end position="58"/>
    </location>
</feature>
<feature type="compositionally biased region" description="Pro residues" evidence="3">
    <location>
        <begin position="39"/>
        <end position="53"/>
    </location>
</feature>
<feature type="glycosylation site" description="N-linked (GlcNAc...) asparagine" evidence="2">
    <location>
        <position position="57"/>
    </location>
</feature>
<feature type="sequence variant" id="VAR_049348" description="In dbSNP:rs284662.">
    <original>S</original>
    <variation>G</variation>
    <location>
        <position position="137"/>
    </location>
</feature>
<feature type="mutagenesis site" description="Loss of enzymatic activity, no loss of B3GNT2-binding and activation." evidence="7">
    <original>Q</original>
    <variation>A</variation>
    <location>
        <position position="246"/>
    </location>
</feature>
<protein>
    <recommendedName>
        <fullName>UDP-GlcNAc:betaGal beta-1,3-N-acetylglucosaminyltransferase 8</fullName>
        <shortName>BGnT-8</shortName>
        <shortName>Beta-1,3-Gn-T8</shortName>
        <shortName>Beta-1,3-N-acetylglucosaminyltransferase 8</shortName>
        <shortName>Beta3Gn-T8</shortName>
        <ecNumber>2.4.1.-</ecNumber>
    </recommendedName>
</protein>
<keyword id="KW-0325">Glycoprotein</keyword>
<keyword id="KW-0328">Glycosyltransferase</keyword>
<keyword id="KW-0333">Golgi apparatus</keyword>
<keyword id="KW-0472">Membrane</keyword>
<keyword id="KW-1267">Proteomics identification</keyword>
<keyword id="KW-1185">Reference proteome</keyword>
<keyword id="KW-0735">Signal-anchor</keyword>
<keyword id="KW-0808">Transferase</keyword>
<keyword id="KW-0812">Transmembrane</keyword>
<keyword id="KW-1133">Transmembrane helix</keyword>
<gene>
    <name evidence="11" type="primary">B3GNT8</name>
    <name evidence="8" type="synonym">B3GALT7</name>
    <name evidence="10" type="synonym">BGALT15</name>
</gene>
<organism>
    <name type="scientific">Homo sapiens</name>
    <name type="common">Human</name>
    <dbReference type="NCBI Taxonomy" id="9606"/>
    <lineage>
        <taxon>Eukaryota</taxon>
        <taxon>Metazoa</taxon>
        <taxon>Chordata</taxon>
        <taxon>Craniata</taxon>
        <taxon>Vertebrata</taxon>
        <taxon>Euteleostomi</taxon>
        <taxon>Mammalia</taxon>
        <taxon>Eutheria</taxon>
        <taxon>Euarchontoglires</taxon>
        <taxon>Primates</taxon>
        <taxon>Haplorrhini</taxon>
        <taxon>Catarrhini</taxon>
        <taxon>Hominidae</taxon>
        <taxon>Homo</taxon>
    </lineage>
</organism>
<proteinExistence type="evidence at protein level"/>
<evidence type="ECO:0000250" key="1">
    <source>
        <dbReference type="UniProtKB" id="Q9NY97"/>
    </source>
</evidence>
<evidence type="ECO:0000255" key="2"/>
<evidence type="ECO:0000256" key="3">
    <source>
        <dbReference type="SAM" id="MobiDB-lite"/>
    </source>
</evidence>
<evidence type="ECO:0000269" key="4">
    <source>
    </source>
</evidence>
<evidence type="ECO:0000269" key="5">
    <source>
    </source>
</evidence>
<evidence type="ECO:0000269" key="6">
    <source>
    </source>
</evidence>
<evidence type="ECO:0000269" key="7">
    <source>
    </source>
</evidence>
<evidence type="ECO:0000303" key="8">
    <source>
    </source>
</evidence>
<evidence type="ECO:0000305" key="9"/>
<evidence type="ECO:0000312" key="10">
    <source>
        <dbReference type="EMBL" id="AAP34405.1"/>
    </source>
</evidence>
<evidence type="ECO:0000312" key="11">
    <source>
        <dbReference type="EMBL" id="BAD86525.1"/>
    </source>
</evidence>
<evidence type="ECO:0000312" key="12">
    <source>
        <dbReference type="EMBL" id="CAD11601.1"/>
    </source>
</evidence>
<name>B3GN8_HUMAN</name>
<dbReference type="EC" id="2.4.1.-"/>
<dbReference type="EMBL" id="AY277592">
    <property type="protein sequence ID" value="AAP34405.1"/>
    <property type="molecule type" value="mRNA"/>
</dbReference>
<dbReference type="EMBL" id="AB175895">
    <property type="protein sequence ID" value="BAD86525.1"/>
    <property type="molecule type" value="mRNA"/>
</dbReference>
<dbReference type="EMBL" id="AJ419172">
    <property type="protein sequence ID" value="CAD11601.1"/>
    <property type="molecule type" value="mRNA"/>
</dbReference>
<dbReference type="CCDS" id="CCDS12582.1"/>
<dbReference type="RefSeq" id="NP_001372577.1">
    <property type="nucleotide sequence ID" value="NM_001385648.2"/>
</dbReference>
<dbReference type="RefSeq" id="NP_940942.1">
    <property type="nucleotide sequence ID" value="NM_198540.2"/>
</dbReference>
<dbReference type="RefSeq" id="XP_011525236.1">
    <property type="nucleotide sequence ID" value="XM_011526934.2"/>
</dbReference>
<dbReference type="SMR" id="Q7Z7M8"/>
<dbReference type="BioGRID" id="131936">
    <property type="interactions" value="53"/>
</dbReference>
<dbReference type="FunCoup" id="Q7Z7M8">
    <property type="interactions" value="40"/>
</dbReference>
<dbReference type="IntAct" id="Q7Z7M8">
    <property type="interactions" value="22"/>
</dbReference>
<dbReference type="STRING" id="9606.ENSP00000312700"/>
<dbReference type="CAZy" id="GT31">
    <property type="family name" value="Glycosyltransferase Family 31"/>
</dbReference>
<dbReference type="GlyCosmos" id="Q7Z7M8">
    <property type="glycosylation" value="1 site, No reported glycans"/>
</dbReference>
<dbReference type="GlyGen" id="Q7Z7M8">
    <property type="glycosylation" value="2 sites"/>
</dbReference>
<dbReference type="iPTMnet" id="Q7Z7M8"/>
<dbReference type="PhosphoSitePlus" id="Q7Z7M8"/>
<dbReference type="BioMuta" id="B3GNT8"/>
<dbReference type="DMDM" id="74713777"/>
<dbReference type="CPTAC" id="CPTAC-1233"/>
<dbReference type="jPOST" id="Q7Z7M8"/>
<dbReference type="MassIVE" id="Q7Z7M8"/>
<dbReference type="PaxDb" id="9606-ENSP00000312700"/>
<dbReference type="PeptideAtlas" id="Q7Z7M8"/>
<dbReference type="ProteomicsDB" id="69570"/>
<dbReference type="Antibodypedia" id="70706">
    <property type="antibodies" value="11 antibodies from 8 providers"/>
</dbReference>
<dbReference type="DNASU" id="374907"/>
<dbReference type="Ensembl" id="ENST00000321702.2">
    <property type="protein sequence ID" value="ENSP00000312700.1"/>
    <property type="gene ID" value="ENSG00000177191.3"/>
</dbReference>
<dbReference type="Ensembl" id="ENST00000691102.1">
    <property type="protein sequence ID" value="ENSP00000510371.1"/>
    <property type="gene ID" value="ENSG00000177191.3"/>
</dbReference>
<dbReference type="GeneID" id="374907"/>
<dbReference type="KEGG" id="hsa:374907"/>
<dbReference type="MANE-Select" id="ENST00000691102.1">
    <property type="protein sequence ID" value="ENSP00000510371.1"/>
    <property type="RefSeq nucleotide sequence ID" value="NM_001385648.2"/>
    <property type="RefSeq protein sequence ID" value="NP_001372577.1"/>
</dbReference>
<dbReference type="UCSC" id="uc002oqs.3">
    <property type="organism name" value="human"/>
</dbReference>
<dbReference type="AGR" id="HGNC:24139"/>
<dbReference type="CTD" id="374907"/>
<dbReference type="DisGeNET" id="374907"/>
<dbReference type="GeneCards" id="B3GNT8"/>
<dbReference type="HGNC" id="HGNC:24139">
    <property type="gene designation" value="B3GNT8"/>
</dbReference>
<dbReference type="HPA" id="ENSG00000177191">
    <property type="expression patterns" value="Tissue enhanced (esophagus, intestine, vagina)"/>
</dbReference>
<dbReference type="MIM" id="615357">
    <property type="type" value="gene"/>
</dbReference>
<dbReference type="neXtProt" id="NX_Q7Z7M8"/>
<dbReference type="OpenTargets" id="ENSG00000177191"/>
<dbReference type="PharmGKB" id="PA134910679"/>
<dbReference type="VEuPathDB" id="HostDB:ENSG00000177191"/>
<dbReference type="eggNOG" id="KOG2287">
    <property type="taxonomic scope" value="Eukaryota"/>
</dbReference>
<dbReference type="GeneTree" id="ENSGT00940000161895"/>
<dbReference type="HOGENOM" id="CLU_036849_5_0_1"/>
<dbReference type="InParanoid" id="Q7Z7M8"/>
<dbReference type="OMA" id="GHHCPDV"/>
<dbReference type="OrthoDB" id="5957813at2759"/>
<dbReference type="PAN-GO" id="Q7Z7M8">
    <property type="GO annotations" value="3 GO annotations based on evolutionary models"/>
</dbReference>
<dbReference type="PhylomeDB" id="Q7Z7M8"/>
<dbReference type="TreeFam" id="TF318639"/>
<dbReference type="PathwayCommons" id="Q7Z7M8"/>
<dbReference type="Reactome" id="R-HSA-913709">
    <property type="pathway name" value="O-linked glycosylation of mucins"/>
</dbReference>
<dbReference type="SignaLink" id="Q7Z7M8"/>
<dbReference type="UniPathway" id="UPA00378"/>
<dbReference type="BioGRID-ORCS" id="374907">
    <property type="hits" value="14 hits in 1143 CRISPR screens"/>
</dbReference>
<dbReference type="GenomeRNAi" id="374907"/>
<dbReference type="Pharos" id="Q7Z7M8">
    <property type="development level" value="Tbio"/>
</dbReference>
<dbReference type="PRO" id="PR:Q7Z7M8"/>
<dbReference type="Proteomes" id="UP000005640">
    <property type="component" value="Chromosome 19"/>
</dbReference>
<dbReference type="RNAct" id="Q7Z7M8">
    <property type="molecule type" value="protein"/>
</dbReference>
<dbReference type="Bgee" id="ENSG00000177191">
    <property type="expression patterns" value="Expressed in lower esophagus mucosa and 128 other cell types or tissues"/>
</dbReference>
<dbReference type="GO" id="GO:0070062">
    <property type="term" value="C:extracellular exosome"/>
    <property type="evidence" value="ECO:0007005"/>
    <property type="project" value="UniProtKB"/>
</dbReference>
<dbReference type="GO" id="GO:0000139">
    <property type="term" value="C:Golgi membrane"/>
    <property type="evidence" value="ECO:0000318"/>
    <property type="project" value="GO_Central"/>
</dbReference>
<dbReference type="GO" id="GO:0008499">
    <property type="term" value="F:N-acetyl-beta-D-glucosaminide beta-(1,3)-galactosyltransferase activity"/>
    <property type="evidence" value="ECO:0000304"/>
    <property type="project" value="Reactome"/>
</dbReference>
<dbReference type="GO" id="GO:0016262">
    <property type="term" value="F:protein N-acetylglucosaminyltransferase activity"/>
    <property type="evidence" value="ECO:0000314"/>
    <property type="project" value="HGNC-UCL"/>
</dbReference>
<dbReference type="GO" id="GO:0016266">
    <property type="term" value="P:O-glycan processing"/>
    <property type="evidence" value="ECO:0000304"/>
    <property type="project" value="Reactome"/>
</dbReference>
<dbReference type="GO" id="GO:0030311">
    <property type="term" value="P:poly-N-acetyllactosamine biosynthetic process"/>
    <property type="evidence" value="ECO:0000314"/>
    <property type="project" value="HGNC-UCL"/>
</dbReference>
<dbReference type="GO" id="GO:0006493">
    <property type="term" value="P:protein O-linked glycosylation"/>
    <property type="evidence" value="ECO:0000318"/>
    <property type="project" value="GO_Central"/>
</dbReference>
<dbReference type="FunFam" id="3.90.550.50:FF:000024">
    <property type="entry name" value="Hexosyltransferase"/>
    <property type="match status" value="1"/>
</dbReference>
<dbReference type="Gene3D" id="3.90.550.50">
    <property type="match status" value="1"/>
</dbReference>
<dbReference type="InterPro" id="IPR002659">
    <property type="entry name" value="Glyco_trans_31"/>
</dbReference>
<dbReference type="PANTHER" id="PTHR11214">
    <property type="entry name" value="BETA-1,3-N-ACETYLGLUCOSAMINYLTRANSFERASE"/>
    <property type="match status" value="1"/>
</dbReference>
<dbReference type="PANTHER" id="PTHR11214:SF87">
    <property type="entry name" value="UDP-GLCNAC:BETAGAL BETA-1,3-N-ACETYLGLUCOSAMINYLTRANSFERASE 8"/>
    <property type="match status" value="1"/>
</dbReference>
<dbReference type="Pfam" id="PF01762">
    <property type="entry name" value="Galactosyl_T"/>
    <property type="match status" value="1"/>
</dbReference>